<evidence type="ECO:0000255" key="1">
    <source>
        <dbReference type="HAMAP-Rule" id="MF_01322"/>
    </source>
</evidence>
<feature type="chain" id="PRO_1000141792" description="DNA-directed RNA polymerase subunit beta'">
    <location>
        <begin position="1"/>
        <end position="1404"/>
    </location>
</feature>
<feature type="binding site" evidence="1">
    <location>
        <position position="70"/>
    </location>
    <ligand>
        <name>Zn(2+)</name>
        <dbReference type="ChEBI" id="CHEBI:29105"/>
        <label>1</label>
    </ligand>
</feature>
<feature type="binding site" evidence="1">
    <location>
        <position position="72"/>
    </location>
    <ligand>
        <name>Zn(2+)</name>
        <dbReference type="ChEBI" id="CHEBI:29105"/>
        <label>1</label>
    </ligand>
</feature>
<feature type="binding site" evidence="1">
    <location>
        <position position="85"/>
    </location>
    <ligand>
        <name>Zn(2+)</name>
        <dbReference type="ChEBI" id="CHEBI:29105"/>
        <label>1</label>
    </ligand>
</feature>
<feature type="binding site" evidence="1">
    <location>
        <position position="88"/>
    </location>
    <ligand>
        <name>Zn(2+)</name>
        <dbReference type="ChEBI" id="CHEBI:29105"/>
        <label>1</label>
    </ligand>
</feature>
<feature type="binding site" evidence="1">
    <location>
        <position position="460"/>
    </location>
    <ligand>
        <name>Mg(2+)</name>
        <dbReference type="ChEBI" id="CHEBI:18420"/>
    </ligand>
</feature>
<feature type="binding site" evidence="1">
    <location>
        <position position="462"/>
    </location>
    <ligand>
        <name>Mg(2+)</name>
        <dbReference type="ChEBI" id="CHEBI:18420"/>
    </ligand>
</feature>
<feature type="binding site" evidence="1">
    <location>
        <position position="464"/>
    </location>
    <ligand>
        <name>Mg(2+)</name>
        <dbReference type="ChEBI" id="CHEBI:18420"/>
    </ligand>
</feature>
<feature type="binding site" evidence="1">
    <location>
        <position position="814"/>
    </location>
    <ligand>
        <name>Zn(2+)</name>
        <dbReference type="ChEBI" id="CHEBI:29105"/>
        <label>2</label>
    </ligand>
</feature>
<feature type="binding site" evidence="1">
    <location>
        <position position="888"/>
    </location>
    <ligand>
        <name>Zn(2+)</name>
        <dbReference type="ChEBI" id="CHEBI:29105"/>
        <label>2</label>
    </ligand>
</feature>
<feature type="binding site" evidence="1">
    <location>
        <position position="895"/>
    </location>
    <ligand>
        <name>Zn(2+)</name>
        <dbReference type="ChEBI" id="CHEBI:29105"/>
        <label>2</label>
    </ligand>
</feature>
<feature type="binding site" evidence="1">
    <location>
        <position position="898"/>
    </location>
    <ligand>
        <name>Zn(2+)</name>
        <dbReference type="ChEBI" id="CHEBI:29105"/>
        <label>2</label>
    </ligand>
</feature>
<name>RPOC_SHEPW</name>
<dbReference type="EC" id="2.7.7.6" evidence="1"/>
<dbReference type="EMBL" id="CP000472">
    <property type="protein sequence ID" value="ACJ28760.1"/>
    <property type="molecule type" value="Genomic_DNA"/>
</dbReference>
<dbReference type="RefSeq" id="WP_020912133.1">
    <property type="nucleotide sequence ID" value="NC_011566.1"/>
</dbReference>
<dbReference type="SMR" id="B8CNC6"/>
<dbReference type="STRING" id="225849.swp_2004"/>
<dbReference type="KEGG" id="swp:swp_2004"/>
<dbReference type="eggNOG" id="COG0086">
    <property type="taxonomic scope" value="Bacteria"/>
</dbReference>
<dbReference type="HOGENOM" id="CLU_000524_3_1_6"/>
<dbReference type="OrthoDB" id="9815296at2"/>
<dbReference type="Proteomes" id="UP000000753">
    <property type="component" value="Chromosome"/>
</dbReference>
<dbReference type="GO" id="GO:0000428">
    <property type="term" value="C:DNA-directed RNA polymerase complex"/>
    <property type="evidence" value="ECO:0007669"/>
    <property type="project" value="UniProtKB-KW"/>
</dbReference>
<dbReference type="GO" id="GO:0003677">
    <property type="term" value="F:DNA binding"/>
    <property type="evidence" value="ECO:0007669"/>
    <property type="project" value="UniProtKB-UniRule"/>
</dbReference>
<dbReference type="GO" id="GO:0003899">
    <property type="term" value="F:DNA-directed RNA polymerase activity"/>
    <property type="evidence" value="ECO:0007669"/>
    <property type="project" value="UniProtKB-UniRule"/>
</dbReference>
<dbReference type="GO" id="GO:0000287">
    <property type="term" value="F:magnesium ion binding"/>
    <property type="evidence" value="ECO:0007669"/>
    <property type="project" value="UniProtKB-UniRule"/>
</dbReference>
<dbReference type="GO" id="GO:0008270">
    <property type="term" value="F:zinc ion binding"/>
    <property type="evidence" value="ECO:0007669"/>
    <property type="project" value="UniProtKB-UniRule"/>
</dbReference>
<dbReference type="GO" id="GO:0006351">
    <property type="term" value="P:DNA-templated transcription"/>
    <property type="evidence" value="ECO:0007669"/>
    <property type="project" value="UniProtKB-UniRule"/>
</dbReference>
<dbReference type="CDD" id="cd02655">
    <property type="entry name" value="RNAP_beta'_C"/>
    <property type="match status" value="1"/>
</dbReference>
<dbReference type="CDD" id="cd01609">
    <property type="entry name" value="RNAP_beta'_N"/>
    <property type="match status" value="1"/>
</dbReference>
<dbReference type="FunFam" id="1.10.132.30:FF:000003">
    <property type="entry name" value="DNA-directed RNA polymerase subunit beta"/>
    <property type="match status" value="1"/>
</dbReference>
<dbReference type="FunFam" id="1.10.150.390:FF:000002">
    <property type="entry name" value="DNA-directed RNA polymerase subunit beta"/>
    <property type="match status" value="1"/>
</dbReference>
<dbReference type="FunFam" id="1.10.40.90:FF:000001">
    <property type="entry name" value="DNA-directed RNA polymerase subunit beta"/>
    <property type="match status" value="1"/>
</dbReference>
<dbReference type="FunFam" id="4.10.860.120:FF:000001">
    <property type="entry name" value="DNA-directed RNA polymerase subunit beta"/>
    <property type="match status" value="1"/>
</dbReference>
<dbReference type="Gene3D" id="1.10.132.30">
    <property type="match status" value="1"/>
</dbReference>
<dbReference type="Gene3D" id="1.10.150.390">
    <property type="match status" value="1"/>
</dbReference>
<dbReference type="Gene3D" id="1.10.1790.20">
    <property type="match status" value="1"/>
</dbReference>
<dbReference type="Gene3D" id="1.10.40.90">
    <property type="match status" value="1"/>
</dbReference>
<dbReference type="Gene3D" id="2.40.40.20">
    <property type="match status" value="1"/>
</dbReference>
<dbReference type="Gene3D" id="2.40.50.100">
    <property type="match status" value="3"/>
</dbReference>
<dbReference type="Gene3D" id="4.10.860.120">
    <property type="entry name" value="RNA polymerase II, clamp domain"/>
    <property type="match status" value="1"/>
</dbReference>
<dbReference type="Gene3D" id="1.10.274.100">
    <property type="entry name" value="RNA polymerase Rpb1, domain 3"/>
    <property type="match status" value="2"/>
</dbReference>
<dbReference type="HAMAP" id="MF_01322">
    <property type="entry name" value="RNApol_bact_RpoC"/>
    <property type="match status" value="1"/>
</dbReference>
<dbReference type="InterPro" id="IPR045867">
    <property type="entry name" value="DNA-dir_RpoC_beta_prime"/>
</dbReference>
<dbReference type="InterPro" id="IPR012754">
    <property type="entry name" value="DNA-dir_RpoC_beta_prime_bact"/>
</dbReference>
<dbReference type="InterPro" id="IPR000722">
    <property type="entry name" value="RNA_pol_asu"/>
</dbReference>
<dbReference type="InterPro" id="IPR006592">
    <property type="entry name" value="RNA_pol_N"/>
</dbReference>
<dbReference type="InterPro" id="IPR007080">
    <property type="entry name" value="RNA_pol_Rpb1_1"/>
</dbReference>
<dbReference type="InterPro" id="IPR007066">
    <property type="entry name" value="RNA_pol_Rpb1_3"/>
</dbReference>
<dbReference type="InterPro" id="IPR042102">
    <property type="entry name" value="RNA_pol_Rpb1_3_sf"/>
</dbReference>
<dbReference type="InterPro" id="IPR007083">
    <property type="entry name" value="RNA_pol_Rpb1_4"/>
</dbReference>
<dbReference type="InterPro" id="IPR007081">
    <property type="entry name" value="RNA_pol_Rpb1_5"/>
</dbReference>
<dbReference type="InterPro" id="IPR044893">
    <property type="entry name" value="RNA_pol_Rpb1_clamp_domain"/>
</dbReference>
<dbReference type="InterPro" id="IPR038120">
    <property type="entry name" value="Rpb1_funnel_sf"/>
</dbReference>
<dbReference type="NCBIfam" id="TIGR02386">
    <property type="entry name" value="rpoC_TIGR"/>
    <property type="match status" value="1"/>
</dbReference>
<dbReference type="PANTHER" id="PTHR19376">
    <property type="entry name" value="DNA-DIRECTED RNA POLYMERASE"/>
    <property type="match status" value="1"/>
</dbReference>
<dbReference type="PANTHER" id="PTHR19376:SF54">
    <property type="entry name" value="DNA-DIRECTED RNA POLYMERASE SUBUNIT BETA"/>
    <property type="match status" value="1"/>
</dbReference>
<dbReference type="Pfam" id="PF04997">
    <property type="entry name" value="RNA_pol_Rpb1_1"/>
    <property type="match status" value="1"/>
</dbReference>
<dbReference type="Pfam" id="PF00623">
    <property type="entry name" value="RNA_pol_Rpb1_2"/>
    <property type="match status" value="2"/>
</dbReference>
<dbReference type="Pfam" id="PF04983">
    <property type="entry name" value="RNA_pol_Rpb1_3"/>
    <property type="match status" value="1"/>
</dbReference>
<dbReference type="Pfam" id="PF05000">
    <property type="entry name" value="RNA_pol_Rpb1_4"/>
    <property type="match status" value="1"/>
</dbReference>
<dbReference type="Pfam" id="PF04998">
    <property type="entry name" value="RNA_pol_Rpb1_5"/>
    <property type="match status" value="1"/>
</dbReference>
<dbReference type="SMART" id="SM00663">
    <property type="entry name" value="RPOLA_N"/>
    <property type="match status" value="1"/>
</dbReference>
<dbReference type="SUPFAM" id="SSF64484">
    <property type="entry name" value="beta and beta-prime subunits of DNA dependent RNA-polymerase"/>
    <property type="match status" value="1"/>
</dbReference>
<proteinExistence type="inferred from homology"/>
<keyword id="KW-0240">DNA-directed RNA polymerase</keyword>
<keyword id="KW-0460">Magnesium</keyword>
<keyword id="KW-0479">Metal-binding</keyword>
<keyword id="KW-0548">Nucleotidyltransferase</keyword>
<keyword id="KW-0804">Transcription</keyword>
<keyword id="KW-0808">Transferase</keyword>
<keyword id="KW-0862">Zinc</keyword>
<comment type="function">
    <text evidence="1">DNA-dependent RNA polymerase catalyzes the transcription of DNA into RNA using the four ribonucleoside triphosphates as substrates.</text>
</comment>
<comment type="catalytic activity">
    <reaction evidence="1">
        <text>RNA(n) + a ribonucleoside 5'-triphosphate = RNA(n+1) + diphosphate</text>
        <dbReference type="Rhea" id="RHEA:21248"/>
        <dbReference type="Rhea" id="RHEA-COMP:14527"/>
        <dbReference type="Rhea" id="RHEA-COMP:17342"/>
        <dbReference type="ChEBI" id="CHEBI:33019"/>
        <dbReference type="ChEBI" id="CHEBI:61557"/>
        <dbReference type="ChEBI" id="CHEBI:140395"/>
        <dbReference type="EC" id="2.7.7.6"/>
    </reaction>
</comment>
<comment type="cofactor">
    <cofactor evidence="1">
        <name>Mg(2+)</name>
        <dbReference type="ChEBI" id="CHEBI:18420"/>
    </cofactor>
    <text evidence="1">Binds 1 Mg(2+) ion per subunit.</text>
</comment>
<comment type="cofactor">
    <cofactor evidence="1">
        <name>Zn(2+)</name>
        <dbReference type="ChEBI" id="CHEBI:29105"/>
    </cofactor>
    <text evidence="1">Binds 2 Zn(2+) ions per subunit.</text>
</comment>
<comment type="subunit">
    <text evidence="1">The RNAP catalytic core consists of 2 alpha, 1 beta, 1 beta' and 1 omega subunit. When a sigma factor is associated with the core the holoenzyme is formed, which can initiate transcription.</text>
</comment>
<comment type="similarity">
    <text evidence="1">Belongs to the RNA polymerase beta' chain family.</text>
</comment>
<gene>
    <name evidence="1" type="primary">rpoC</name>
    <name type="ordered locus">swp_2004</name>
</gene>
<reference key="1">
    <citation type="journal article" date="2008" name="PLoS ONE">
        <title>Environmental adaptation: genomic analysis of the piezotolerant and psychrotolerant deep-sea iron reducing bacterium Shewanella piezotolerans WP3.</title>
        <authorList>
            <person name="Wang F."/>
            <person name="Wang J."/>
            <person name="Jian H."/>
            <person name="Zhang B."/>
            <person name="Li S."/>
            <person name="Wang F."/>
            <person name="Zeng X."/>
            <person name="Gao L."/>
            <person name="Bartlett D.H."/>
            <person name="Yu J."/>
            <person name="Hu S."/>
            <person name="Xiao X."/>
        </authorList>
    </citation>
    <scope>NUCLEOTIDE SEQUENCE [LARGE SCALE GENOMIC DNA]</scope>
    <source>
        <strain>WP3 / JCM 13877</strain>
    </source>
</reference>
<sequence length="1404" mass="155072">MKDLLKFLKQQSKTEEFEGIKIGLASPDLIRSWSFGEVKKPETINYRTFKPEREGLFCARIFGPVKDYECLCGKYKRLKHRGVICEKCGVEVTQTKVRRERMGHIDLASPVAHIWFLKSLPSRIGLMLDMTLRDIERVLYFESFVVIEPGMTSLERGQMLTEENYLDALEEYGDEFEAKMGAEAVLELLRAIELEKEIEMMREELPSINSETRRKKITKRLKLIEAFFQSGNKPEWMILKVLPVLPPDLRPLVPLDGGRFATSDLNDLYRRVINRNNRLKRLLDLAAPDIIVRNEKRMLQESVDALLDNGRRGRAITGSNKRPLKSLADMIKGKQGRFRQNLLGKRVDYSGRSVITVGPTLRLHQCGLPKKMALELFKPFIYGKLEGRGLATTIKAAKKMVEREVPEVWDVLDDVIREHPVMLNRAPTLHRLGIQAFEPVLIEGKAIQLHPLVCAAYNADFDGDQMAVHVPLTLEAQLEARSLMMSTNNILSPANGEPVITPSQDVVLGLYYTSRECVNGKGEGMAFESVAEAEKAYRTGAAELHARVKVRITETKTDEAGEKVKTRRIVDTTVGRALLSLILPKGLSFDLVNQNMGKKQISKLLNTCYRQLGLKDTVIFADQLMYTGFHFATVSGASVGINDMVIPDEKYTLVADAEAEVLEIQEQFQSGLVTAGERYNKVIDIWASANEKVSKAMMDNLSSETVINRDGEEEKQESFNSIYMMADSGARGSAAQIRQLAGMRGLMAKPDGSIIETPITANFREGLNVSQYFISTHGARKGLADTALKTANSGYLTRRLVDVAQDLVVIEEDCGTFEGLTMKPLIEGGDVVEPLRERVLGRVVAQDVFKPGTEEVLIPRNTLLDEAWCDTVEDNSIDEMIVRSVISCDTDFGVCAACYGRDLARGHIINQGEAIGVVAAQSIGEPGTQLTMRTFHIGGAASRASAENNVQVKNAGTLKLHNAKHVTNSEGKLVIVSRSSELAIIDELGREKERYKVPYGTVLEKLEDAPVAAGEIIANWDPHTHPIITEVAGSTKFVDMIEGVTMTRQTDELTGLSSIVVLDVAQRPTAGKEMRPMIRLVAADGGDLMIPGTEVPAQYFLPGNAIVNLDDNAPINVGDALARIPQESSKTRDITGGLPRVADLFEARKPKEPAILAEVSGTISFGKETKGKRRLVITPAEGGDHYEEMIPKWRNLNVFEGEKVERGEVIADGPEAAHDILRLRGIHNVANYIVNEVQDVYRLQGVKINDKHIEVIIRQMLRKCEIANAGDSEFLAGEQAEVSRVKIANRELEAQGKQPATFERELLGITKASLATESFISAASFQETTRVLTEAAVGGKSDKLRGLKENVIVGRLIPAGTGYSYHQKRAEAAVKPAAEEAPAISASEAEQNLADLLNLAGSSD</sequence>
<accession>B8CNC6</accession>
<protein>
    <recommendedName>
        <fullName evidence="1">DNA-directed RNA polymerase subunit beta'</fullName>
        <shortName evidence="1">RNAP subunit beta'</shortName>
        <ecNumber evidence="1">2.7.7.6</ecNumber>
    </recommendedName>
    <alternativeName>
        <fullName evidence="1">RNA polymerase subunit beta'</fullName>
    </alternativeName>
    <alternativeName>
        <fullName evidence="1">Transcriptase subunit beta'</fullName>
    </alternativeName>
</protein>
<organism>
    <name type="scientific">Shewanella piezotolerans (strain WP3 / JCM 13877)</name>
    <dbReference type="NCBI Taxonomy" id="225849"/>
    <lineage>
        <taxon>Bacteria</taxon>
        <taxon>Pseudomonadati</taxon>
        <taxon>Pseudomonadota</taxon>
        <taxon>Gammaproteobacteria</taxon>
        <taxon>Alteromonadales</taxon>
        <taxon>Shewanellaceae</taxon>
        <taxon>Shewanella</taxon>
    </lineage>
</organism>